<organism>
    <name type="scientific">Chromohalobacter salexigens (strain ATCC BAA-138 / DSM 3043 / CIP 106854 / NCIMB 13768 / 1H11)</name>
    <dbReference type="NCBI Taxonomy" id="290398"/>
    <lineage>
        <taxon>Bacteria</taxon>
        <taxon>Pseudomonadati</taxon>
        <taxon>Pseudomonadota</taxon>
        <taxon>Gammaproteobacteria</taxon>
        <taxon>Oceanospirillales</taxon>
        <taxon>Halomonadaceae</taxon>
        <taxon>Chromohalobacter</taxon>
    </lineage>
</organism>
<name>PHNC_CHRSD</name>
<evidence type="ECO:0000255" key="1">
    <source>
        <dbReference type="HAMAP-Rule" id="MF_01713"/>
    </source>
</evidence>
<evidence type="ECO:0000256" key="2">
    <source>
        <dbReference type="SAM" id="MobiDB-lite"/>
    </source>
</evidence>
<gene>
    <name evidence="1" type="primary">phnC</name>
    <name type="ordered locus">Csal_0248</name>
</gene>
<sequence length="272" mass="29996">MLELQRLTKTYATGDTALREVSLAVPRGQVVGLIGPSGAGKSTLIRCINRLVAPSGGRILLGDVDLAAVGRAELRRQRRRIGMIFQEYALVERLTVMENVLSGRLGYVPFWRSFTRRFPGRDIENAYRLLDRVGLLAHADKRADALSGGQRQRVGIARALAQEPALLLVDEPTASLDPKTSRQIMRLILEVCEERDLPAIVNIHDVPLAQQFMHRLVGLHAGEVVFDGAPVALDETVLATIYGAEDWASSGREPAPEREPEDTERHLAEVGR</sequence>
<dbReference type="EC" id="7.3.2.2" evidence="1"/>
<dbReference type="EMBL" id="CP000285">
    <property type="protein sequence ID" value="ABE57612.1"/>
    <property type="molecule type" value="Genomic_DNA"/>
</dbReference>
<dbReference type="RefSeq" id="WP_011505558.1">
    <property type="nucleotide sequence ID" value="NC_007963.1"/>
</dbReference>
<dbReference type="SMR" id="Q1R0Z6"/>
<dbReference type="STRING" id="290398.Csal_0248"/>
<dbReference type="GeneID" id="95332994"/>
<dbReference type="KEGG" id="csa:Csal_0248"/>
<dbReference type="eggNOG" id="COG3638">
    <property type="taxonomic scope" value="Bacteria"/>
</dbReference>
<dbReference type="HOGENOM" id="CLU_000604_1_22_6"/>
<dbReference type="OrthoDB" id="9802264at2"/>
<dbReference type="Proteomes" id="UP000000239">
    <property type="component" value="Chromosome"/>
</dbReference>
<dbReference type="GO" id="GO:0005886">
    <property type="term" value="C:plasma membrane"/>
    <property type="evidence" value="ECO:0007669"/>
    <property type="project" value="UniProtKB-SubCell"/>
</dbReference>
<dbReference type="GO" id="GO:0015416">
    <property type="term" value="F:ABC-type phosphonate transporter activity"/>
    <property type="evidence" value="ECO:0007669"/>
    <property type="project" value="UniProtKB-EC"/>
</dbReference>
<dbReference type="GO" id="GO:0005524">
    <property type="term" value="F:ATP binding"/>
    <property type="evidence" value="ECO:0007669"/>
    <property type="project" value="UniProtKB-KW"/>
</dbReference>
<dbReference type="GO" id="GO:0016887">
    <property type="term" value="F:ATP hydrolysis activity"/>
    <property type="evidence" value="ECO:0007669"/>
    <property type="project" value="InterPro"/>
</dbReference>
<dbReference type="CDD" id="cd03256">
    <property type="entry name" value="ABC_PhnC_transporter"/>
    <property type="match status" value="1"/>
</dbReference>
<dbReference type="Gene3D" id="3.40.50.300">
    <property type="entry name" value="P-loop containing nucleotide triphosphate hydrolases"/>
    <property type="match status" value="1"/>
</dbReference>
<dbReference type="InterPro" id="IPR003593">
    <property type="entry name" value="AAA+_ATPase"/>
</dbReference>
<dbReference type="InterPro" id="IPR003439">
    <property type="entry name" value="ABC_transporter-like_ATP-bd"/>
</dbReference>
<dbReference type="InterPro" id="IPR017871">
    <property type="entry name" value="ABC_transporter-like_CS"/>
</dbReference>
<dbReference type="InterPro" id="IPR012693">
    <property type="entry name" value="ABC_transpr_PhnC"/>
</dbReference>
<dbReference type="InterPro" id="IPR050086">
    <property type="entry name" value="MetN_ABC_transporter-like"/>
</dbReference>
<dbReference type="InterPro" id="IPR027417">
    <property type="entry name" value="P-loop_NTPase"/>
</dbReference>
<dbReference type="NCBIfam" id="TIGR02315">
    <property type="entry name" value="ABC_phnC"/>
    <property type="match status" value="1"/>
</dbReference>
<dbReference type="PANTHER" id="PTHR43166">
    <property type="entry name" value="AMINO ACID IMPORT ATP-BINDING PROTEIN"/>
    <property type="match status" value="1"/>
</dbReference>
<dbReference type="PANTHER" id="PTHR43166:SF6">
    <property type="entry name" value="PHOSPHONATES IMPORT ATP-BINDING PROTEIN PHNC"/>
    <property type="match status" value="1"/>
</dbReference>
<dbReference type="Pfam" id="PF00005">
    <property type="entry name" value="ABC_tran"/>
    <property type="match status" value="1"/>
</dbReference>
<dbReference type="SMART" id="SM00382">
    <property type="entry name" value="AAA"/>
    <property type="match status" value="1"/>
</dbReference>
<dbReference type="SUPFAM" id="SSF52540">
    <property type="entry name" value="P-loop containing nucleoside triphosphate hydrolases"/>
    <property type="match status" value="1"/>
</dbReference>
<dbReference type="PROSITE" id="PS00211">
    <property type="entry name" value="ABC_TRANSPORTER_1"/>
    <property type="match status" value="1"/>
</dbReference>
<dbReference type="PROSITE" id="PS50893">
    <property type="entry name" value="ABC_TRANSPORTER_2"/>
    <property type="match status" value="1"/>
</dbReference>
<dbReference type="PROSITE" id="PS51249">
    <property type="entry name" value="PHNC"/>
    <property type="match status" value="1"/>
</dbReference>
<comment type="function">
    <text evidence="1">Part of the ABC transporter complex PhnCDE involved in phosphonates import. Responsible for energy coupling to the transport system.</text>
</comment>
<comment type="catalytic activity">
    <reaction evidence="1">
        <text>phosphonate(out) + ATP + H2O = phosphonate(in) + ADP + phosphate + H(+)</text>
        <dbReference type="Rhea" id="RHEA:18065"/>
        <dbReference type="ChEBI" id="CHEBI:15377"/>
        <dbReference type="ChEBI" id="CHEBI:15378"/>
        <dbReference type="ChEBI" id="CHEBI:16215"/>
        <dbReference type="ChEBI" id="CHEBI:30616"/>
        <dbReference type="ChEBI" id="CHEBI:43474"/>
        <dbReference type="ChEBI" id="CHEBI:456216"/>
        <dbReference type="EC" id="7.3.2.2"/>
    </reaction>
</comment>
<comment type="subunit">
    <text evidence="1">The complex is composed of two ATP-binding proteins (PhnC), two transmembrane proteins (PhnE) and a solute-binding protein (PhnD).</text>
</comment>
<comment type="subcellular location">
    <subcellularLocation>
        <location evidence="1">Cell inner membrane</location>
        <topology evidence="1">Peripheral membrane protein</topology>
    </subcellularLocation>
</comment>
<comment type="similarity">
    <text evidence="1">Belongs to the ABC transporter superfamily. Phosphonates importer (TC 3.A.1.9.1) family.</text>
</comment>
<keyword id="KW-0067">ATP-binding</keyword>
<keyword id="KW-0997">Cell inner membrane</keyword>
<keyword id="KW-1003">Cell membrane</keyword>
<keyword id="KW-0472">Membrane</keyword>
<keyword id="KW-0547">Nucleotide-binding</keyword>
<keyword id="KW-0918">Phosphonate transport</keyword>
<keyword id="KW-1185">Reference proteome</keyword>
<keyword id="KW-1278">Translocase</keyword>
<keyword id="KW-0813">Transport</keyword>
<accession>Q1R0Z6</accession>
<protein>
    <recommendedName>
        <fullName evidence="1">Phosphonates import ATP-binding protein PhnC</fullName>
        <ecNumber evidence="1">7.3.2.2</ecNumber>
    </recommendedName>
</protein>
<proteinExistence type="inferred from homology"/>
<reference key="1">
    <citation type="journal article" date="2011" name="Stand. Genomic Sci.">
        <title>Complete genome sequence of the halophilic and highly halotolerant Chromohalobacter salexigens type strain (1H11(T)).</title>
        <authorList>
            <person name="Copeland A."/>
            <person name="O'Connor K."/>
            <person name="Lucas S."/>
            <person name="Lapidus A."/>
            <person name="Berry K.W."/>
            <person name="Detter J.C."/>
            <person name="Del Rio T.G."/>
            <person name="Hammon N."/>
            <person name="Dalin E."/>
            <person name="Tice H."/>
            <person name="Pitluck S."/>
            <person name="Bruce D."/>
            <person name="Goodwin L."/>
            <person name="Han C."/>
            <person name="Tapia R."/>
            <person name="Saunders E."/>
            <person name="Schmutz J."/>
            <person name="Brettin T."/>
            <person name="Larimer F."/>
            <person name="Land M."/>
            <person name="Hauser L."/>
            <person name="Vargas C."/>
            <person name="Nieto J.J."/>
            <person name="Kyrpides N.C."/>
            <person name="Ivanova N."/>
            <person name="Goker M."/>
            <person name="Klenk H.P."/>
            <person name="Csonka L.N."/>
            <person name="Woyke T."/>
        </authorList>
    </citation>
    <scope>NUCLEOTIDE SEQUENCE [LARGE SCALE GENOMIC DNA]</scope>
    <source>
        <strain>ATCC BAA-138 / DSM 3043 / CIP 106854 / NCIMB 13768 / 1H11</strain>
    </source>
</reference>
<feature type="chain" id="PRO_0000274708" description="Phosphonates import ATP-binding protein PhnC">
    <location>
        <begin position="1"/>
        <end position="272"/>
    </location>
</feature>
<feature type="domain" description="ABC transporter" evidence="1">
    <location>
        <begin position="2"/>
        <end position="246"/>
    </location>
</feature>
<feature type="region of interest" description="Disordered" evidence="2">
    <location>
        <begin position="248"/>
        <end position="272"/>
    </location>
</feature>
<feature type="compositionally biased region" description="Basic and acidic residues" evidence="2">
    <location>
        <begin position="254"/>
        <end position="272"/>
    </location>
</feature>
<feature type="binding site" evidence="1">
    <location>
        <begin position="35"/>
        <end position="42"/>
    </location>
    <ligand>
        <name>ATP</name>
        <dbReference type="ChEBI" id="CHEBI:30616"/>
    </ligand>
</feature>